<gene>
    <name evidence="1" type="primary">fmt</name>
    <name type="ordered locus">BAV0203</name>
</gene>
<dbReference type="EC" id="2.1.2.9" evidence="1"/>
<dbReference type="EMBL" id="AM167904">
    <property type="protein sequence ID" value="CAJ47808.1"/>
    <property type="molecule type" value="Genomic_DNA"/>
</dbReference>
<dbReference type="RefSeq" id="WP_012415906.1">
    <property type="nucleotide sequence ID" value="NC_010645.1"/>
</dbReference>
<dbReference type="SMR" id="Q2L0K7"/>
<dbReference type="STRING" id="360910.BAV0203"/>
<dbReference type="KEGG" id="bav:BAV0203"/>
<dbReference type="eggNOG" id="COG0223">
    <property type="taxonomic scope" value="Bacteria"/>
</dbReference>
<dbReference type="HOGENOM" id="CLU_033347_1_2_4"/>
<dbReference type="OrthoDB" id="9802815at2"/>
<dbReference type="Proteomes" id="UP000001977">
    <property type="component" value="Chromosome"/>
</dbReference>
<dbReference type="GO" id="GO:0005829">
    <property type="term" value="C:cytosol"/>
    <property type="evidence" value="ECO:0007669"/>
    <property type="project" value="TreeGrafter"/>
</dbReference>
<dbReference type="GO" id="GO:0004479">
    <property type="term" value="F:methionyl-tRNA formyltransferase activity"/>
    <property type="evidence" value="ECO:0007669"/>
    <property type="project" value="UniProtKB-UniRule"/>
</dbReference>
<dbReference type="CDD" id="cd08646">
    <property type="entry name" value="FMT_core_Met-tRNA-FMT_N"/>
    <property type="match status" value="1"/>
</dbReference>
<dbReference type="CDD" id="cd08704">
    <property type="entry name" value="Met_tRNA_FMT_C"/>
    <property type="match status" value="1"/>
</dbReference>
<dbReference type="Gene3D" id="3.10.25.10">
    <property type="entry name" value="Formyl transferase, C-terminal domain"/>
    <property type="match status" value="1"/>
</dbReference>
<dbReference type="Gene3D" id="3.40.50.170">
    <property type="entry name" value="Formyl transferase, N-terminal domain"/>
    <property type="match status" value="1"/>
</dbReference>
<dbReference type="HAMAP" id="MF_00182">
    <property type="entry name" value="Formyl_trans"/>
    <property type="match status" value="1"/>
</dbReference>
<dbReference type="InterPro" id="IPR005794">
    <property type="entry name" value="Fmt"/>
</dbReference>
<dbReference type="InterPro" id="IPR005793">
    <property type="entry name" value="Formyl_trans_C"/>
</dbReference>
<dbReference type="InterPro" id="IPR037022">
    <property type="entry name" value="Formyl_trans_C_sf"/>
</dbReference>
<dbReference type="InterPro" id="IPR002376">
    <property type="entry name" value="Formyl_transf_N"/>
</dbReference>
<dbReference type="InterPro" id="IPR036477">
    <property type="entry name" value="Formyl_transf_N_sf"/>
</dbReference>
<dbReference type="InterPro" id="IPR011034">
    <property type="entry name" value="Formyl_transferase-like_C_sf"/>
</dbReference>
<dbReference type="InterPro" id="IPR001555">
    <property type="entry name" value="GART_AS"/>
</dbReference>
<dbReference type="InterPro" id="IPR044135">
    <property type="entry name" value="Met-tRNA-FMT_C"/>
</dbReference>
<dbReference type="InterPro" id="IPR041711">
    <property type="entry name" value="Met-tRNA-FMT_N"/>
</dbReference>
<dbReference type="NCBIfam" id="TIGR00460">
    <property type="entry name" value="fmt"/>
    <property type="match status" value="1"/>
</dbReference>
<dbReference type="PANTHER" id="PTHR11138">
    <property type="entry name" value="METHIONYL-TRNA FORMYLTRANSFERASE"/>
    <property type="match status" value="1"/>
</dbReference>
<dbReference type="PANTHER" id="PTHR11138:SF5">
    <property type="entry name" value="METHIONYL-TRNA FORMYLTRANSFERASE, MITOCHONDRIAL"/>
    <property type="match status" value="1"/>
</dbReference>
<dbReference type="Pfam" id="PF02911">
    <property type="entry name" value="Formyl_trans_C"/>
    <property type="match status" value="1"/>
</dbReference>
<dbReference type="Pfam" id="PF00551">
    <property type="entry name" value="Formyl_trans_N"/>
    <property type="match status" value="1"/>
</dbReference>
<dbReference type="SUPFAM" id="SSF50486">
    <property type="entry name" value="FMT C-terminal domain-like"/>
    <property type="match status" value="1"/>
</dbReference>
<dbReference type="SUPFAM" id="SSF53328">
    <property type="entry name" value="Formyltransferase"/>
    <property type="match status" value="1"/>
</dbReference>
<dbReference type="PROSITE" id="PS00373">
    <property type="entry name" value="GART"/>
    <property type="match status" value="1"/>
</dbReference>
<reference key="1">
    <citation type="journal article" date="2006" name="J. Bacteriol.">
        <title>Comparison of the genome sequence of the poultry pathogen Bordetella avium with those of B. bronchiseptica, B. pertussis, and B. parapertussis reveals extensive diversity in surface structures associated with host interaction.</title>
        <authorList>
            <person name="Sebaihia M."/>
            <person name="Preston A."/>
            <person name="Maskell D.J."/>
            <person name="Kuzmiak H."/>
            <person name="Connell T.D."/>
            <person name="King N.D."/>
            <person name="Orndorff P.E."/>
            <person name="Miyamoto D.M."/>
            <person name="Thomson N.R."/>
            <person name="Harris D."/>
            <person name="Goble A."/>
            <person name="Lord A."/>
            <person name="Murphy L."/>
            <person name="Quail M.A."/>
            <person name="Rutter S."/>
            <person name="Squares R."/>
            <person name="Squares S."/>
            <person name="Woodward J."/>
            <person name="Parkhill J."/>
            <person name="Temple L.M."/>
        </authorList>
    </citation>
    <scope>NUCLEOTIDE SEQUENCE [LARGE SCALE GENOMIC DNA]</scope>
    <source>
        <strain>197N</strain>
    </source>
</reference>
<evidence type="ECO:0000255" key="1">
    <source>
        <dbReference type="HAMAP-Rule" id="MF_00182"/>
    </source>
</evidence>
<comment type="function">
    <text evidence="1">Attaches a formyl group to the free amino group of methionyl-tRNA(fMet). The formyl group appears to play a dual role in the initiator identity of N-formylmethionyl-tRNA by promoting its recognition by IF2 and preventing the misappropriation of this tRNA by the elongation apparatus.</text>
</comment>
<comment type="catalytic activity">
    <reaction evidence="1">
        <text>L-methionyl-tRNA(fMet) + (6R)-10-formyltetrahydrofolate = N-formyl-L-methionyl-tRNA(fMet) + (6S)-5,6,7,8-tetrahydrofolate + H(+)</text>
        <dbReference type="Rhea" id="RHEA:24380"/>
        <dbReference type="Rhea" id="RHEA-COMP:9952"/>
        <dbReference type="Rhea" id="RHEA-COMP:9953"/>
        <dbReference type="ChEBI" id="CHEBI:15378"/>
        <dbReference type="ChEBI" id="CHEBI:57453"/>
        <dbReference type="ChEBI" id="CHEBI:78530"/>
        <dbReference type="ChEBI" id="CHEBI:78844"/>
        <dbReference type="ChEBI" id="CHEBI:195366"/>
        <dbReference type="EC" id="2.1.2.9"/>
    </reaction>
</comment>
<comment type="similarity">
    <text evidence="1">Belongs to the Fmt family.</text>
</comment>
<feature type="chain" id="PRO_1000020024" description="Methionyl-tRNA formyltransferase">
    <location>
        <begin position="1"/>
        <end position="311"/>
    </location>
</feature>
<feature type="binding site" evidence="1">
    <location>
        <begin position="117"/>
        <end position="120"/>
    </location>
    <ligand>
        <name>(6S)-5,6,7,8-tetrahydrofolate</name>
        <dbReference type="ChEBI" id="CHEBI:57453"/>
    </ligand>
</feature>
<name>FMT_BORA1</name>
<keyword id="KW-0648">Protein biosynthesis</keyword>
<keyword id="KW-1185">Reference proteome</keyword>
<keyword id="KW-0808">Transferase</keyword>
<organism>
    <name type="scientific">Bordetella avium (strain 197N)</name>
    <dbReference type="NCBI Taxonomy" id="360910"/>
    <lineage>
        <taxon>Bacteria</taxon>
        <taxon>Pseudomonadati</taxon>
        <taxon>Pseudomonadota</taxon>
        <taxon>Betaproteobacteria</taxon>
        <taxon>Burkholderiales</taxon>
        <taxon>Alcaligenaceae</taxon>
        <taxon>Bordetella</taxon>
    </lineage>
</organism>
<accession>Q2L0K7</accession>
<protein>
    <recommendedName>
        <fullName evidence="1">Methionyl-tRNA formyltransferase</fullName>
        <ecNumber evidence="1">2.1.2.9</ecNumber>
    </recommendedName>
</protein>
<proteinExistence type="inferred from homology"/>
<sequence length="311" mass="32751">MRLVFAGTPEFARLALEALLAAGHEIPLVLTQPDRPAGRGLKLTPSPVKEAALAAGIEVAQPRSLRLDGRYPDEALAAQARLVAVAPEVMVVAAYGLILPRWTLALPARGCLNIHASLLPRWRGAAPIQRAIEAGDARTGVTIMQMDDGLDTGDMLLERTVPIGAETTAAVLHDELARVGAEAIVAALADLPALAPRKQPEQGVTYAAKLDKAEAALKLDESAELLARRIRAFNPVPGASLRLPGLNEPVKVWQAEALPESSPAAPGTVLRASAQGVDIATGQGVLRLLELQKAGGKRQSAEVFVRGWQPA</sequence>